<organism>
    <name type="scientific">Homo sapiens</name>
    <name type="common">Human</name>
    <dbReference type="NCBI Taxonomy" id="9606"/>
    <lineage>
        <taxon>Eukaryota</taxon>
        <taxon>Metazoa</taxon>
        <taxon>Chordata</taxon>
        <taxon>Craniata</taxon>
        <taxon>Vertebrata</taxon>
        <taxon>Euteleostomi</taxon>
        <taxon>Mammalia</taxon>
        <taxon>Eutheria</taxon>
        <taxon>Euarchontoglires</taxon>
        <taxon>Primates</taxon>
        <taxon>Haplorrhini</taxon>
        <taxon>Catarrhini</taxon>
        <taxon>Hominidae</taxon>
        <taxon>Homo</taxon>
    </lineage>
</organism>
<evidence type="ECO:0000255" key="1"/>
<evidence type="ECO:0000255" key="2">
    <source>
        <dbReference type="PROSITE-ProRule" id="PRU00190"/>
    </source>
</evidence>
<evidence type="ECO:0000255" key="3">
    <source>
        <dbReference type="PROSITE-ProRule" id="PRU00904"/>
    </source>
</evidence>
<evidence type="ECO:0000256" key="4">
    <source>
        <dbReference type="SAM" id="MobiDB-lite"/>
    </source>
</evidence>
<evidence type="ECO:0000269" key="5">
    <source>
    </source>
</evidence>
<evidence type="ECO:0000269" key="6">
    <source>
    </source>
</evidence>
<evidence type="ECO:0000269" key="7">
    <source>
    </source>
</evidence>
<evidence type="ECO:0000269" key="8">
    <source>
    </source>
</evidence>
<evidence type="ECO:0000269" key="9">
    <source>
    </source>
</evidence>
<evidence type="ECO:0000269" key="10">
    <source>
    </source>
</evidence>
<evidence type="ECO:0000269" key="11">
    <source>
    </source>
</evidence>
<evidence type="ECO:0000269" key="12">
    <source>
    </source>
</evidence>
<evidence type="ECO:0000269" key="13">
    <source>
    </source>
</evidence>
<evidence type="ECO:0000269" key="14">
    <source>
    </source>
</evidence>
<evidence type="ECO:0000269" key="15">
    <source>
    </source>
</evidence>
<evidence type="ECO:0000269" key="16">
    <source>
    </source>
</evidence>
<evidence type="ECO:0000269" key="17">
    <source>
    </source>
</evidence>
<evidence type="ECO:0000269" key="18">
    <source>
    </source>
</evidence>
<evidence type="ECO:0000303" key="19">
    <source>
    </source>
</evidence>
<evidence type="ECO:0000303" key="20">
    <source>
    </source>
</evidence>
<evidence type="ECO:0000303" key="21">
    <source>
    </source>
</evidence>
<evidence type="ECO:0000303" key="22">
    <source>
    </source>
</evidence>
<evidence type="ECO:0000305" key="23"/>
<evidence type="ECO:0000305" key="24">
    <source>
    </source>
</evidence>
<evidence type="ECO:0000305" key="25">
    <source>
    </source>
</evidence>
<evidence type="ECO:0000312" key="26">
    <source>
        <dbReference type="HGNC" id="HGNC:29489"/>
    </source>
</evidence>
<evidence type="ECO:0007744" key="27">
    <source>
    </source>
</evidence>
<evidence type="ECO:0007744" key="28">
    <source>
    </source>
</evidence>
<evidence type="ECO:0007744" key="29">
    <source>
    </source>
</evidence>
<evidence type="ECO:0007829" key="30">
    <source>
        <dbReference type="PDB" id="3F9X"/>
    </source>
</evidence>
<evidence type="ECO:0007829" key="31">
    <source>
        <dbReference type="PDB" id="4IJ8"/>
    </source>
</evidence>
<evidence type="ECO:0007829" key="32">
    <source>
        <dbReference type="PDB" id="5TH7"/>
    </source>
</evidence>
<evidence type="ECO:0007829" key="33">
    <source>
        <dbReference type="PDB" id="5V2N"/>
    </source>
</evidence>
<name>KMT5A_HUMAN</name>
<reference key="1">
    <citation type="journal article" date="2002" name="Mol. Cell">
        <title>PR-Set7 is a nucleosome-specific methyltransferase that modifies lysine 20 of histone H4 and is associated with silent chromatin.</title>
        <authorList>
            <person name="Nishioka K."/>
            <person name="Rice J.C."/>
            <person name="Sarma K."/>
            <person name="Erdjument-Bromage H."/>
            <person name="Werner J."/>
            <person name="Wang Y."/>
            <person name="Chuikov S."/>
            <person name="Valenzuela P."/>
            <person name="Tempst P."/>
            <person name="Steward R."/>
            <person name="Lis J.T."/>
            <person name="Allis C.D."/>
            <person name="Reinberg D."/>
        </authorList>
    </citation>
    <scope>NUCLEOTIDE SEQUENCE [MRNA] (ISOFORM 1)</scope>
    <scope>PROTEIN SEQUENCE OF 108-131; 220-231 AND 349-393</scope>
    <scope>FUNCTION</scope>
    <scope>SUBCELLULAR LOCATION</scope>
    <scope>CATALYTIC ACTIVITY</scope>
    <scope>MUTAGENESIS OF ARG-336</scope>
    <source>
        <tissue>Cervix carcinoma</tissue>
    </source>
</reference>
<reference key="2">
    <citation type="journal article" date="2002" name="Curr. Biol.">
        <title>Purification and functional characterization of SET8, a nucleosomal histone H4-lysine 20-specific methyltransferase.</title>
        <authorList>
            <person name="Fang J."/>
            <person name="Feng Q."/>
            <person name="Ketel C.S."/>
            <person name="Wang H."/>
            <person name="Cao R."/>
            <person name="Xia L."/>
            <person name="Erdjument-Bromage H."/>
            <person name="Tempst P."/>
            <person name="Simon J.A."/>
            <person name="Zhang Y."/>
        </authorList>
    </citation>
    <scope>NUCLEOTIDE SEQUENCE [MRNA] (ISOFORM 2)</scope>
    <scope>PROTEIN SEQUENCE OF 83-103; 109-134; 141-151; 162-172; 221-230; 245-260; 280-297 AND 350-393</scope>
    <scope>FUNCTION</scope>
    <scope>CATALYTIC ACTIVITY</scope>
    <scope>MUTAGENESIS OF HIS-340 AND 385-ILE--HIS-393</scope>
</reference>
<reference key="3">
    <citation type="submission" date="2001-07" db="EMBL/GenBank/DDBJ databases">
        <title>A novel PR/SET domain-containing gene, SET07, as a candidate tumor suppressor.</title>
        <authorList>
            <person name="Tain F."/>
            <person name="Huang S."/>
        </authorList>
    </citation>
    <scope>NUCLEOTIDE SEQUENCE [MRNA] (ISOFORM 1)</scope>
</reference>
<reference key="4">
    <citation type="journal article" date="2004" name="Nat. Genet.">
        <title>Complete sequencing and characterization of 21,243 full-length human cDNAs.</title>
        <authorList>
            <person name="Ota T."/>
            <person name="Suzuki Y."/>
            <person name="Nishikawa T."/>
            <person name="Otsuki T."/>
            <person name="Sugiyama T."/>
            <person name="Irie R."/>
            <person name="Wakamatsu A."/>
            <person name="Hayashi K."/>
            <person name="Sato H."/>
            <person name="Nagai K."/>
            <person name="Kimura K."/>
            <person name="Makita H."/>
            <person name="Sekine M."/>
            <person name="Obayashi M."/>
            <person name="Nishi T."/>
            <person name="Shibahara T."/>
            <person name="Tanaka T."/>
            <person name="Ishii S."/>
            <person name="Yamamoto J."/>
            <person name="Saito K."/>
            <person name="Kawai Y."/>
            <person name="Isono Y."/>
            <person name="Nakamura Y."/>
            <person name="Nagahari K."/>
            <person name="Murakami K."/>
            <person name="Yasuda T."/>
            <person name="Iwayanagi T."/>
            <person name="Wagatsuma M."/>
            <person name="Shiratori A."/>
            <person name="Sudo H."/>
            <person name="Hosoiri T."/>
            <person name="Kaku Y."/>
            <person name="Kodaira H."/>
            <person name="Kondo H."/>
            <person name="Sugawara M."/>
            <person name="Takahashi M."/>
            <person name="Kanda K."/>
            <person name="Yokoi T."/>
            <person name="Furuya T."/>
            <person name="Kikkawa E."/>
            <person name="Omura Y."/>
            <person name="Abe K."/>
            <person name="Kamihara K."/>
            <person name="Katsuta N."/>
            <person name="Sato K."/>
            <person name="Tanikawa M."/>
            <person name="Yamazaki M."/>
            <person name="Ninomiya K."/>
            <person name="Ishibashi T."/>
            <person name="Yamashita H."/>
            <person name="Murakawa K."/>
            <person name="Fujimori K."/>
            <person name="Tanai H."/>
            <person name="Kimata M."/>
            <person name="Watanabe M."/>
            <person name="Hiraoka S."/>
            <person name="Chiba Y."/>
            <person name="Ishida S."/>
            <person name="Ono Y."/>
            <person name="Takiguchi S."/>
            <person name="Watanabe S."/>
            <person name="Yosida M."/>
            <person name="Hotuta T."/>
            <person name="Kusano J."/>
            <person name="Kanehori K."/>
            <person name="Takahashi-Fujii A."/>
            <person name="Hara H."/>
            <person name="Tanase T.-O."/>
            <person name="Nomura Y."/>
            <person name="Togiya S."/>
            <person name="Komai F."/>
            <person name="Hara R."/>
            <person name="Takeuchi K."/>
            <person name="Arita M."/>
            <person name="Imose N."/>
            <person name="Musashino K."/>
            <person name="Yuuki H."/>
            <person name="Oshima A."/>
            <person name="Sasaki N."/>
            <person name="Aotsuka S."/>
            <person name="Yoshikawa Y."/>
            <person name="Matsunawa H."/>
            <person name="Ichihara T."/>
            <person name="Shiohata N."/>
            <person name="Sano S."/>
            <person name="Moriya S."/>
            <person name="Momiyama H."/>
            <person name="Satoh N."/>
            <person name="Takami S."/>
            <person name="Terashima Y."/>
            <person name="Suzuki O."/>
            <person name="Nakagawa S."/>
            <person name="Senoh A."/>
            <person name="Mizoguchi H."/>
            <person name="Goto Y."/>
            <person name="Shimizu F."/>
            <person name="Wakebe H."/>
            <person name="Hishigaki H."/>
            <person name="Watanabe T."/>
            <person name="Sugiyama A."/>
            <person name="Takemoto M."/>
            <person name="Kawakami B."/>
            <person name="Yamazaki M."/>
            <person name="Watanabe K."/>
            <person name="Kumagai A."/>
            <person name="Itakura S."/>
            <person name="Fukuzumi Y."/>
            <person name="Fujimori Y."/>
            <person name="Komiyama M."/>
            <person name="Tashiro H."/>
            <person name="Tanigami A."/>
            <person name="Fujiwara T."/>
            <person name="Ono T."/>
            <person name="Yamada K."/>
            <person name="Fujii Y."/>
            <person name="Ozaki K."/>
            <person name="Hirao M."/>
            <person name="Ohmori Y."/>
            <person name="Kawabata A."/>
            <person name="Hikiji T."/>
            <person name="Kobatake N."/>
            <person name="Inagaki H."/>
            <person name="Ikema Y."/>
            <person name="Okamoto S."/>
            <person name="Okitani R."/>
            <person name="Kawakami T."/>
            <person name="Noguchi S."/>
            <person name="Itoh T."/>
            <person name="Shigeta K."/>
            <person name="Senba T."/>
            <person name="Matsumura K."/>
            <person name="Nakajima Y."/>
            <person name="Mizuno T."/>
            <person name="Morinaga M."/>
            <person name="Sasaki M."/>
            <person name="Togashi T."/>
            <person name="Oyama M."/>
            <person name="Hata H."/>
            <person name="Watanabe M."/>
            <person name="Komatsu T."/>
            <person name="Mizushima-Sugano J."/>
            <person name="Satoh T."/>
            <person name="Shirai Y."/>
            <person name="Takahashi Y."/>
            <person name="Nakagawa K."/>
            <person name="Okumura K."/>
            <person name="Nagase T."/>
            <person name="Nomura N."/>
            <person name="Kikuchi H."/>
            <person name="Masuho Y."/>
            <person name="Yamashita R."/>
            <person name="Nakai K."/>
            <person name="Yada T."/>
            <person name="Nakamura Y."/>
            <person name="Ohara O."/>
            <person name="Isogai T."/>
            <person name="Sugano S."/>
        </authorList>
    </citation>
    <scope>NUCLEOTIDE SEQUENCE [LARGE SCALE MRNA] (ISOFORM 2)</scope>
    <source>
        <tissue>Thymus</tissue>
    </source>
</reference>
<reference key="5">
    <citation type="journal article" date="2004" name="Genome Res.">
        <title>The status, quality, and expansion of the NIH full-length cDNA project: the Mammalian Gene Collection (MGC).</title>
        <authorList>
            <consortium name="The MGC Project Team"/>
        </authorList>
    </citation>
    <scope>NUCLEOTIDE SEQUENCE [LARGE SCALE MRNA] (ISOFORM 2)</scope>
    <source>
        <tissue>Testis</tissue>
    </source>
</reference>
<reference key="6">
    <citation type="journal article" date="2002" name="Genes Dev.">
        <title>Mitotic-specific methylation of histone H4 Lys 20 follows increased PR-Set7 expression and its localization to mitotic chromosomes.</title>
        <authorList>
            <person name="Rice J.C."/>
            <person name="Nishioka K."/>
            <person name="Sarma K."/>
            <person name="Steward R."/>
            <person name="Reinberg D."/>
            <person name="Allis C.D."/>
        </authorList>
    </citation>
    <scope>SUBCELLULAR LOCATION</scope>
    <scope>DEVELOPMENTAL STAGE</scope>
</reference>
<reference key="7">
    <citation type="journal article" date="2004" name="Mol. Cell">
        <title>A switch in mitotic histone H4 lysine 20 methylation status is linked to M phase defects upon loss of HCF-1.</title>
        <authorList>
            <person name="Julien E."/>
            <person name="Herr W."/>
        </authorList>
    </citation>
    <scope>FUNCTION</scope>
    <scope>INDUCTION</scope>
</reference>
<reference key="8">
    <citation type="journal article" date="2005" name="J. Biol. Chem.">
        <title>SET8 recognizes the sequence RHRK20VLRDN within the N terminus of histone H4 and mono-methylates lysine 20.</title>
        <authorList>
            <person name="Yin Y."/>
            <person name="Liu C."/>
            <person name="Tsai S.N."/>
            <person name="Zhou B."/>
            <person name="Ngai S.M."/>
            <person name="Zhu G."/>
        </authorList>
    </citation>
    <scope>FUNCTION</scope>
    <scope>CATALYTIC ACTIVITY</scope>
</reference>
<reference key="9">
    <citation type="journal article" date="2006" name="J. Biol. Chem.">
        <title>A trans-tail histone code defined by monomethylated H4 Lys-20 and H3 Lys-9 demarcates distinct regions of silent chromatin.</title>
        <authorList>
            <person name="Sims J.K."/>
            <person name="Houston S.I."/>
            <person name="Magazinnik T."/>
            <person name="Rice J.C."/>
        </authorList>
    </citation>
    <scope>FUNCTION</scope>
</reference>
<reference key="10">
    <citation type="journal article" date="2007" name="Mol. Cell">
        <title>Modulation of p53 function by SET8-mediated methylation at lysine 382.</title>
        <authorList>
            <person name="Shi X."/>
            <person name="Kachirskaia I."/>
            <person name="Yamaguchi H."/>
            <person name="West L.E."/>
            <person name="Wen H."/>
            <person name="Wang E.W."/>
            <person name="Dutta S."/>
            <person name="Appella E."/>
            <person name="Gozani O."/>
        </authorList>
    </citation>
    <scope>FUNCTION</scope>
    <scope>MUTAGENESIS OF ASP-379</scope>
</reference>
<reference key="11">
    <citation type="journal article" date="2008" name="Oncogene">
        <title>Histone H4 lysine 20 monomethylation promotes transcriptional repression by L3MBTL1.</title>
        <authorList>
            <person name="Kalakonda N."/>
            <person name="Fischle W."/>
            <person name="Boccuni P."/>
            <person name="Gurvich N."/>
            <person name="Hoya-Arias R."/>
            <person name="Zhao X."/>
            <person name="Miyata Y."/>
            <person name="Macgrogan D."/>
            <person name="Zhang J."/>
            <person name="Sims J.K."/>
            <person name="Rice J.C."/>
            <person name="Nimer S.D."/>
        </authorList>
    </citation>
    <scope>INTERACTION WITH L3MBTL1</scope>
</reference>
<reference key="12">
    <citation type="journal article" date="2008" name="Proc. Natl. Acad. Sci. U.S.A.">
        <title>A quantitative atlas of mitotic phosphorylation.</title>
        <authorList>
            <person name="Dephoure N."/>
            <person name="Zhou C."/>
            <person name="Villen J."/>
            <person name="Beausoleil S.A."/>
            <person name="Bakalarski C.E."/>
            <person name="Elledge S.J."/>
            <person name="Gygi S.P."/>
        </authorList>
    </citation>
    <scope>PHOSPHORYLATION [LARGE SCALE ANALYSIS] AT SER-100</scope>
    <scope>IDENTIFICATION BY MASS SPECTROMETRY [LARGE SCALE ANALYSIS]</scope>
    <source>
        <tissue>Cervix carcinoma</tissue>
    </source>
</reference>
<reference key="13">
    <citation type="journal article" date="2010" name="J. Biol. Chem.">
        <title>The MBT repeats of L3MBTL1 link SET8-mediated p53 methylation at lysine 382 to target gene repression.</title>
        <authorList>
            <person name="West L.E."/>
            <person name="Roy S."/>
            <person name="Lachmi-Weiner K."/>
            <person name="Hayashi R."/>
            <person name="Shi X."/>
            <person name="Appella E."/>
            <person name="Kutateladze T.G."/>
            <person name="Gozani O."/>
        </authorList>
    </citation>
    <scope>MUTAGENESIS OF ASP-379</scope>
</reference>
<reference key="14">
    <citation type="journal article" date="2010" name="Sci. Signal.">
        <title>Quantitative phosphoproteomics reveals widespread full phosphorylation site occupancy during mitosis.</title>
        <authorList>
            <person name="Olsen J.V."/>
            <person name="Vermeulen M."/>
            <person name="Santamaria A."/>
            <person name="Kumar C."/>
            <person name="Miller M.L."/>
            <person name="Jensen L.J."/>
            <person name="Gnad F."/>
            <person name="Cox J."/>
            <person name="Jensen T.S."/>
            <person name="Nigg E.A."/>
            <person name="Brunak S."/>
            <person name="Mann M."/>
        </authorList>
    </citation>
    <scope>PHOSPHORYLATION [LARGE SCALE ANALYSIS] AT SER-100</scope>
    <scope>IDENTIFICATION BY MASS SPECTROMETRY [LARGE SCALE ANALYSIS]</scope>
    <source>
        <tissue>Cervix carcinoma</tissue>
    </source>
</reference>
<reference key="15">
    <citation type="journal article" date="2013" name="Genes Dev.">
        <title>The tumor suppressor SirT2 regulates cell cycle progression and genome stability by modulating the mitotic deposition of H4K20 methylation.</title>
        <authorList>
            <person name="Serrano L."/>
            <person name="Martinez-Redondo P."/>
            <person name="Marazuela-Duque A."/>
            <person name="Vazquez B.N."/>
            <person name="Dooley S.J."/>
            <person name="Voigt P."/>
            <person name="Beck D.B."/>
            <person name="Kane-Goldsmith N."/>
            <person name="Tong Q."/>
            <person name="Rabanal R.M."/>
            <person name="Fondevila D."/>
            <person name="Munoz P."/>
            <person name="Kruger M."/>
            <person name="Tischfield J.A."/>
            <person name="Vaquero A."/>
        </authorList>
    </citation>
    <scope>ACETYLATION AT LYS-162</scope>
    <scope>DEACETYLATION AT LYS-162 BY SIRT2</scope>
    <scope>INTERACTION WITH SIRT2</scope>
    <scope>SUBCELLULAR LOCATION</scope>
    <scope>MUTAGENESIS OF LYS-162</scope>
    <scope>MASS SPECTROMETRY (ISOFORM 2)</scope>
</reference>
<reference key="16">
    <citation type="journal article" date="2013" name="J. Proteome Res.">
        <title>Toward a comprehensive characterization of a human cancer cell phosphoproteome.</title>
        <authorList>
            <person name="Zhou H."/>
            <person name="Di Palma S."/>
            <person name="Preisinger C."/>
            <person name="Peng M."/>
            <person name="Polat A.N."/>
            <person name="Heck A.J."/>
            <person name="Mohammed S."/>
        </authorList>
    </citation>
    <scope>PHOSPHORYLATION [LARGE SCALE ANALYSIS] AT THR-181</scope>
    <scope>IDENTIFICATION BY MASS SPECTROMETRY [LARGE SCALE ANALYSIS]</scope>
    <source>
        <tissue>Erythroleukemia</tissue>
    </source>
</reference>
<reference key="17">
    <citation type="journal article" date="2013" name="Mol. Cell">
        <title>CRL1-FBXO11 promotes Cdt2 ubiquitylation and degradation and regulates Pr-Set7/Set8-mediated cellular migration.</title>
        <authorList>
            <person name="Abbas T."/>
            <person name="Mueller A.C."/>
            <person name="Shibata E."/>
            <person name="Keaton M."/>
            <person name="Rossi M."/>
            <person name="Dutta A."/>
        </authorList>
    </citation>
    <scope>FUNCTION</scope>
    <scope>INDUCTION</scope>
    <scope>UBIQUITINATION</scope>
    <scope>MUTAGENESIS OF ARG-336 AND ASP-379</scope>
</reference>
<reference key="18">
    <citation type="journal article" date="2016" name="Nature">
        <title>H4K20me0 marks post-replicative chromatin and recruits the TONSL-MMS22L DNA repair complex.</title>
        <authorList>
            <person name="Saredi G."/>
            <person name="Huang H."/>
            <person name="Hammond C.M."/>
            <person name="Alabert C."/>
            <person name="Bekker-Jensen S."/>
            <person name="Forne I."/>
            <person name="Reveron-Gomez N."/>
            <person name="Foster B.M."/>
            <person name="Mlejnkova L."/>
            <person name="Bartke T."/>
            <person name="Cejka P."/>
            <person name="Mailand N."/>
            <person name="Imhof A."/>
            <person name="Patel D.J."/>
            <person name="Groth A."/>
        </authorList>
    </citation>
    <scope>FUNCTION</scope>
    <scope>CATALYTIC ACTIVITY</scope>
</reference>
<reference key="19">
    <citation type="journal article" date="2005" name="Genes Dev.">
        <title>Specificity and mechanism of the histone methyltransferase Pr-Set7.</title>
        <authorList>
            <person name="Xiao B."/>
            <person name="Jing C."/>
            <person name="Kelly G."/>
            <person name="Walker P.A."/>
            <person name="Muskett F.W."/>
            <person name="Frenkiel T.A."/>
            <person name="Martin S.R."/>
            <person name="Sarma K."/>
            <person name="Reinberg D."/>
            <person name="Gamblin S.J."/>
            <person name="Wilson J.R."/>
        </authorList>
    </citation>
    <scope>X-RAY CRYSTALLOGRAPHY (1.5 ANGSTROMS) OF 233-393 IN COMPLEX WITH HISTONE H4 AND S-ADENOSYLMETHIONINE</scope>
    <scope>FUNCTION</scope>
</reference>
<reference key="20">
    <citation type="journal article" date="2005" name="Genes Dev.">
        <title>Structural and functional analysis of SET8, a histone H4 'Lys-20' methyltransferase.</title>
        <authorList>
            <person name="Couture J.-F."/>
            <person name="Collazo E."/>
            <person name="Brunzelle J.S."/>
            <person name="Trievel R.C."/>
        </authorList>
    </citation>
    <scope>X-RAY CRYSTALLOGRAPHY (1.45 ANGSTROMS) OF 231-393 IN COMPLEX WITH HISTONE H4 AND S-ADENOSYLMETHIONINE</scope>
    <scope>FUNCTION</scope>
    <scope>MUTAGENESIS OF TYR-286; GLU-300; CYS-311; TYR-375; ASP-379 AND HIS-388</scope>
</reference>
<comment type="function">
    <text evidence="5 6 8 9 10 11 12 13 17 18">Protein-lysine N-methyltransferase that monomethylates both histones and non-histone proteins (PubMed:12086618, PubMed:12121615, PubMed:15964846, PubMed:17707234, PubMed:27338793). Specifically monomethylates 'Lys-20' of histone H4 (H4K20me1) (PubMed:12086618, PubMed:12121615, PubMed:15200950, PubMed:15933069, PubMed:15933070, PubMed:15964846, PubMed:16517599, PubMed:27338793). H4K20me1 is enriched during mitosis and represents a specific tag for epigenetic transcriptional repression (PubMed:12086618, PubMed:12121615, PubMed:15200950, PubMed:15933069, PubMed:15933070, PubMed:15964846, PubMed:16517599). Mainly functions in euchromatin regions, thereby playing a central role in the silencing of euchromatic genes (PubMed:12086618, PubMed:12121615, PubMed:15200950, PubMed:15933069, PubMed:15933070, PubMed:15964846, PubMed:16517599). Required for cell proliferation, probably by contributing to the maintenance of proper higher-order structure of DNA during mitosis (PubMed:12086618, PubMed:12121615, PubMed:15200950, PubMed:15933069, PubMed:15933070, PubMed:15964846, PubMed:16517599). Involved in chromosome condensation and proper cytokinesis (PubMed:12086618, PubMed:12121615, PubMed:15200950, PubMed:15933069, PubMed:15933070, PubMed:15964846, PubMed:16517599). Nucleosomes are preferred as substrate compared to free histones (PubMed:12086618, PubMed:12121615, PubMed:15200950, PubMed:15933069, PubMed:15933070, PubMed:15964846, PubMed:16517599). Mediates monomethylation of p53/TP53 at 'Lys-382', leading to repress p53/TP53-target genes (PubMed:17707234). Plays a negative role in TGF-beta response regulation and a positive role in cell migration (PubMed:23478445).</text>
</comment>
<comment type="catalytic activity">
    <reaction evidence="3 5 6 11 18">
        <text>L-lysyl(20)-[histone H4] + S-adenosyl-L-methionine = N(6)-methyl-L-lysyl(20)-[histone H4] + S-adenosyl-L-homocysteine + H(+)</text>
        <dbReference type="Rhea" id="RHEA:60344"/>
        <dbReference type="Rhea" id="RHEA-COMP:15554"/>
        <dbReference type="Rhea" id="RHEA-COMP:15555"/>
        <dbReference type="ChEBI" id="CHEBI:15378"/>
        <dbReference type="ChEBI" id="CHEBI:29969"/>
        <dbReference type="ChEBI" id="CHEBI:57856"/>
        <dbReference type="ChEBI" id="CHEBI:59789"/>
        <dbReference type="ChEBI" id="CHEBI:61929"/>
        <dbReference type="EC" id="2.1.1.361"/>
    </reaction>
</comment>
<comment type="catalytic activity">
    <reaction evidence="24">
        <text>L-lysyl-[protein] + S-adenosyl-L-methionine = N(6)-methyl-L-lysyl-[protein] + S-adenosyl-L-homocysteine + H(+)</text>
        <dbReference type="Rhea" id="RHEA:51736"/>
        <dbReference type="Rhea" id="RHEA-COMP:9752"/>
        <dbReference type="Rhea" id="RHEA-COMP:13053"/>
        <dbReference type="ChEBI" id="CHEBI:15378"/>
        <dbReference type="ChEBI" id="CHEBI:29969"/>
        <dbReference type="ChEBI" id="CHEBI:57856"/>
        <dbReference type="ChEBI" id="CHEBI:59789"/>
        <dbReference type="ChEBI" id="CHEBI:61929"/>
    </reaction>
</comment>
<comment type="subunit">
    <text evidence="14">Interacts with L3MBTL1.</text>
</comment>
<comment type="subunit">
    <molecule>Isoform 2</molecule>
    <text evidence="16">Interacts with SIRT2 (phosphorylated form); the interaction is direct, stimulates KMT5A-mediated methyltransferase activity at histone H4 'Lys-20' (H4K20me1) and is increased in a H(2)O(2)-induced oxidative stress-dependent manner.</text>
</comment>
<comment type="interaction">
    <interactant intactId="EBI-1268946">
        <id>Q9NQR1</id>
    </interactant>
    <interactant intactId="EBI-302023">
        <id>P62805</id>
        <label>H4C9</label>
    </interactant>
    <organismsDiffer>false</organismsDiffer>
    <experiments>6</experiments>
</comment>
<comment type="interaction">
    <interactant intactId="EBI-1268946">
        <id>Q9NQR1</id>
    </interactant>
    <interactant intactId="EBI-357966">
        <id>P07910</id>
        <label>HNRNPC</label>
    </interactant>
    <organismsDiffer>false</organismsDiffer>
    <experiments>2</experiments>
</comment>
<comment type="interaction">
    <interactant intactId="EBI-1268946">
        <id>Q9NQR1</id>
    </interactant>
    <interactant intactId="EBI-1797287">
        <id>Q15672</id>
        <label>TWIST1</label>
    </interactant>
    <organismsDiffer>false</organismsDiffer>
    <experiments>5</experiments>
</comment>
<comment type="subcellular location">
    <subcellularLocation>
        <location evidence="5">Nucleus</location>
    </subcellularLocation>
    <subcellularLocation>
        <location evidence="5 7 16">Chromosome</location>
    </subcellularLocation>
    <text evidence="5 7 16">Specifically localizes to mitotic chromosomes (PubMed:12208845). Colocalized with SIRT2 at mitotic foci (PubMed:23468428). Associates with chromosomes during mitosis; association is increased in a H(2)O(2)-induced oxidative stress-dependent manner (PubMed:23468428). Associates with silent chromatin on euchromatic arms (PubMed:12086618). Not associated with constitutive heterochromatin (PubMed:12086618).</text>
</comment>
<comment type="alternative products">
    <event type="alternative splicing"/>
    <isoform>
        <id>Q9NQR1-1</id>
        <name>1</name>
        <sequence type="displayed"/>
    </isoform>
    <isoform>
        <id>Q9NQR1-2</id>
        <name>2</name>
        <sequence type="described" ref="VSP_002226 VSP_002227"/>
    </isoform>
</comment>
<comment type="developmental stage">
    <text evidence="7">Not detected during G1 phase. First detected during S through G2 phases, and peaks during mitosis (at protein level).</text>
</comment>
<comment type="induction">
    <text evidence="8 17">By HCFC1 C-terminal chain, independently of HCFC1 N-terminal chain. Transiently induced by TGF-beta and during the cell cycle.</text>
</comment>
<comment type="domain">
    <text evidence="5 6">Although the SET domain contains the active site of enzymatic activity, both sequences upstream and downstream of the SET domain are required for methyltransferase activity.</text>
</comment>
<comment type="PTM">
    <text evidence="16">Acetylated at Lys-162; does not affect methyltransferase activity. Deacetylated at Lys-162 possibly by SIRT2; does not change methyltransferase activity.</text>
</comment>
<comment type="PTM">
    <text evidence="25">Ubiquitinated and degraded by the DCX(DTL) complex.</text>
</comment>
<comment type="similarity">
    <text evidence="3">Belongs to the class V-like SAM-binding methyltransferase superfamily. Histone-lysine methyltransferase family. PR/SET subfamily.</text>
</comment>
<comment type="caution">
    <text evidence="23">It is uncertain whether Met-1 or Met-72 is the initiator.</text>
</comment>
<comment type="sequence caution" evidence="23">
    <conflict type="erroneous initiation">
        <sequence resource="EMBL-CDS" id="AAL40879"/>
    </conflict>
    <text>Truncated N-terminus.</text>
</comment>
<accession>Q9NQR1</accession>
<accession>A8K9D0</accession>
<accession>Q86W83</accession>
<accession>Q8TD09</accession>
<protein>
    <recommendedName>
        <fullName evidence="23">N-lysine methyltransferase KMT5A</fullName>
        <ecNumber evidence="24">2.1.1.-</ecNumber>
    </recommendedName>
    <alternativeName>
        <fullName>H4-K20-HMTase KMT5A</fullName>
    </alternativeName>
    <alternativeName>
        <fullName>Histone-lysine N-methyltransferase KMT5A</fullName>
        <ecNumber evidence="5 6 11 18">2.1.1.361</ecNumber>
    </alternativeName>
    <alternativeName>
        <fullName>Lysine N-methyltransferase 5A</fullName>
    </alternativeName>
    <alternativeName>
        <fullName evidence="26">Lysine-specific methylase 5A</fullName>
    </alternativeName>
    <alternativeName>
        <fullName>PR/SET domain-containing protein 07</fullName>
        <shortName evidence="22">PR-Set7</shortName>
        <shortName>PR/SET07</shortName>
    </alternativeName>
    <alternativeName>
        <fullName>SET domain-containing protein 8</fullName>
    </alternativeName>
</protein>
<gene>
    <name evidence="26" type="primary">KMT5A</name>
    <name type="synonym">PRSET7</name>
    <name type="synonym">SET07</name>
    <name type="synonym">SET8</name>
    <name type="synonym">SETD8</name>
</gene>
<sequence length="393" mass="42890">MGEGGAAAALVAAAAAAAAAAAAVVAGQRRRRLGRRARCHGPGRAAGGKMSKPCAVEAAAAAVAATAPGPEMVERRGPGRPRTDGENVFTGQSKIYSYMSPNKCSGMRFPLQEENSVTHHEVKCQGKPLAGIYRKREEKRNAGNAVRSAMKSEEQKIKDARKGPLVPFPNQKSEAAEPPKTPPSSCDSTNAAIAKQALKKPIKGKQAPRKKAQGKTQQNRKLTDFYPVRRSSRKSKAELQSEERKRIDELIESGKEEGMKIDLIDGKGRGVIATKQFSRGDFVVEYHGDLIEITDAKKREALYAQDPSTGCYMYYFQYLSKTYCVDATRETNRLGRLINHSKCGNCQTKLHDIDGVPHLILIASRDIAAGEELLYDYGDRSKASIEAHPWLKH</sequence>
<keyword id="KW-0002">3D-structure</keyword>
<keyword id="KW-0007">Acetylation</keyword>
<keyword id="KW-0025">Alternative splicing</keyword>
<keyword id="KW-0131">Cell cycle</keyword>
<keyword id="KW-0132">Cell division</keyword>
<keyword id="KW-0156">Chromatin regulator</keyword>
<keyword id="KW-0158">Chromosome</keyword>
<keyword id="KW-0175">Coiled coil</keyword>
<keyword id="KW-0903">Direct protein sequencing</keyword>
<keyword id="KW-0489">Methyltransferase</keyword>
<keyword id="KW-0498">Mitosis</keyword>
<keyword id="KW-0539">Nucleus</keyword>
<keyword id="KW-0597">Phosphoprotein</keyword>
<keyword id="KW-1267">Proteomics identification</keyword>
<keyword id="KW-1185">Reference proteome</keyword>
<keyword id="KW-0678">Repressor</keyword>
<keyword id="KW-0949">S-adenosyl-L-methionine</keyword>
<keyword id="KW-0804">Transcription</keyword>
<keyword id="KW-0805">Transcription regulation</keyword>
<keyword id="KW-0808">Transferase</keyword>
<keyword id="KW-0832">Ubl conjugation</keyword>
<feature type="chain" id="PRO_0000186081" description="N-lysine methyltransferase KMT5A">
    <location>
        <begin position="1"/>
        <end position="393"/>
    </location>
</feature>
<feature type="domain" description="SET" evidence="2">
    <location>
        <begin position="257"/>
        <end position="378"/>
    </location>
</feature>
<feature type="region of interest" description="Disordered" evidence="4">
    <location>
        <begin position="68"/>
        <end position="88"/>
    </location>
</feature>
<feature type="region of interest" description="Disordered" evidence="4">
    <location>
        <begin position="135"/>
        <end position="241"/>
    </location>
</feature>
<feature type="coiled-coil region" evidence="1">
    <location>
        <begin position="134"/>
        <end position="163"/>
    </location>
</feature>
<feature type="compositionally biased region" description="Basic and acidic residues" evidence="4">
    <location>
        <begin position="72"/>
        <end position="85"/>
    </location>
</feature>
<feature type="compositionally biased region" description="Basic and acidic residues" evidence="4">
    <location>
        <begin position="150"/>
        <end position="162"/>
    </location>
</feature>
<feature type="compositionally biased region" description="Basic residues" evidence="4">
    <location>
        <begin position="197"/>
        <end position="213"/>
    </location>
</feature>
<feature type="binding site">
    <location>
        <begin position="267"/>
        <end position="269"/>
    </location>
    <ligand>
        <name>S-adenosyl-L-methionine</name>
        <dbReference type="ChEBI" id="CHEBI:59789"/>
    </ligand>
</feature>
<feature type="binding site">
    <location>
        <position position="312"/>
    </location>
    <ligand>
        <name>S-adenosyl-L-methionine</name>
        <dbReference type="ChEBI" id="CHEBI:59789"/>
    </ligand>
</feature>
<feature type="binding site">
    <location>
        <begin position="339"/>
        <end position="340"/>
    </location>
    <ligand>
        <name>S-adenosyl-L-methionine</name>
        <dbReference type="ChEBI" id="CHEBI:59789"/>
    </ligand>
</feature>
<feature type="modified residue" description="Phosphoserine" evidence="27 28">
    <location>
        <position position="100"/>
    </location>
</feature>
<feature type="modified residue" description="N6-acetyllysine" evidence="16">
    <location>
        <position position="162"/>
    </location>
</feature>
<feature type="modified residue" description="Phosphothreonine" evidence="29">
    <location>
        <position position="181"/>
    </location>
</feature>
<feature type="splice variant" id="VSP_002226" description="In isoform 2." evidence="19 20 21">
    <location>
        <begin position="1"/>
        <end position="41"/>
    </location>
</feature>
<feature type="splice variant" id="VSP_002227" description="In isoform 2." evidence="19 20 21">
    <original>PGRAAGGKMSKPCAVE</original>
    <variation>MARGRKMSKPRAVEAA</variation>
    <location>
        <begin position="42"/>
        <end position="57"/>
    </location>
</feature>
<feature type="mutagenesis site" description="Does not affect the interaction with SIRT2. Increases the number of mitotic foci formation. Does not affect methyltransferase activity." evidence="16">
    <original>K</original>
    <variation>Q</variation>
    <location>
        <position position="162"/>
    </location>
</feature>
<feature type="mutagenesis site" description="Increases the interaction with SIRT2. Reduces the number of mitotic foci formation. Does not affect methyltransferase activity." evidence="16">
    <original>K</original>
    <variation>R</variation>
    <location>
        <position position="162"/>
    </location>
</feature>
<feature type="mutagenesis site" description="Strongly reduces affinity for histone H4 and abolishes methyltransferase activity." evidence="10">
    <original>Y</original>
    <variation>A</variation>
    <variation>F</variation>
    <location>
        <position position="286"/>
    </location>
</feature>
<feature type="mutagenesis site" description="Strongly reduces affinity for histone H4." evidence="10">
    <original>E</original>
    <variation>A</variation>
    <location>
        <position position="300"/>
    </location>
</feature>
<feature type="mutagenesis site" description="Strongly reduces affinity for histone H4." evidence="10">
    <original>C</original>
    <variation>A</variation>
    <location>
        <position position="311"/>
    </location>
</feature>
<feature type="mutagenesis site" description="Abolishes methyltransferase activity." evidence="5 17">
    <original>R</original>
    <variation>G</variation>
    <location>
        <position position="336"/>
    </location>
</feature>
<feature type="mutagenesis site" description="Strongly decreases methyltransferase activity." evidence="6">
    <original>H</original>
    <variation>A</variation>
    <location>
        <position position="340"/>
    </location>
</feature>
<feature type="mutagenesis site" description="Strongly reduces affinity for histone H4 and methyltransferase activity." evidence="10">
    <original>Y</original>
    <variation>A</variation>
    <location>
        <position position="375"/>
    </location>
</feature>
<feature type="mutagenesis site" description="Alters methyltransferase activity, so that both monomethylation and dimethylation take place." evidence="10">
    <original>Y</original>
    <variation>F</variation>
    <location>
        <position position="375"/>
    </location>
</feature>
<feature type="mutagenesis site" description="Abolishes histone H4 binding and methyltransferase activity." evidence="10 13 15 17">
    <original>D</original>
    <variation>A</variation>
    <variation>N</variation>
    <location>
        <position position="379"/>
    </location>
</feature>
<feature type="mutagenesis site" description="Abolishes methyltransferase activity." evidence="6">
    <location>
        <begin position="385"/>
        <end position="393"/>
    </location>
</feature>
<feature type="mutagenesis site" description="Strongly reduces affinity for histone H4." evidence="10">
    <original>H</original>
    <variation>A</variation>
    <variation>E</variation>
    <location>
        <position position="388"/>
    </location>
</feature>
<feature type="mutagenesis site" description="Increases affinity for histone H4." evidence="10">
    <original>H</original>
    <variation>F</variation>
    <location>
        <position position="388"/>
    </location>
</feature>
<feature type="sequence conflict" description="In Ref. 3; AAF97812." evidence="23" ref="3">
    <original>KG</original>
    <variation>RR</variation>
    <location>
        <begin position="162"/>
        <end position="163"/>
    </location>
</feature>
<feature type="sequence conflict" description="In Ref. 3; AAF97812." evidence="23" ref="3">
    <original>D</original>
    <variation>A</variation>
    <location>
        <position position="281"/>
    </location>
</feature>
<feature type="sequence conflict" description="In Ref. 3; AAF97812." evidence="23" ref="3">
    <original>C</original>
    <variation>R</variation>
    <location>
        <position position="343"/>
    </location>
</feature>
<feature type="sequence conflict" description="In Ref. 5; AAH50346." evidence="23" ref="5">
    <original>P</original>
    <variation>R</variation>
    <location>
        <position position="357"/>
    </location>
</feature>
<feature type="sequence conflict" description="In Ref. 3; AAF97812." evidence="23" ref="3">
    <original>L</original>
    <variation>P</variation>
    <location>
        <position position="373"/>
    </location>
</feature>
<feature type="helix" evidence="30">
    <location>
        <begin position="236"/>
        <end position="253"/>
    </location>
</feature>
<feature type="strand" evidence="30">
    <location>
        <begin position="259"/>
        <end position="264"/>
    </location>
</feature>
<feature type="turn" evidence="30">
    <location>
        <begin position="265"/>
        <end position="267"/>
    </location>
</feature>
<feature type="strand" evidence="30">
    <location>
        <begin position="268"/>
        <end position="275"/>
    </location>
</feature>
<feature type="strand" evidence="30">
    <location>
        <begin position="282"/>
        <end position="285"/>
    </location>
</feature>
<feature type="strand" evidence="30">
    <location>
        <begin position="288"/>
        <end position="292"/>
    </location>
</feature>
<feature type="helix" evidence="30">
    <location>
        <begin position="293"/>
        <end position="303"/>
    </location>
</feature>
<feature type="helix" evidence="32">
    <location>
        <begin position="307"/>
        <end position="309"/>
    </location>
</feature>
<feature type="helix" evidence="31">
    <location>
        <begin position="310"/>
        <end position="312"/>
    </location>
</feature>
<feature type="strand" evidence="30">
    <location>
        <begin position="313"/>
        <end position="318"/>
    </location>
</feature>
<feature type="strand" evidence="30">
    <location>
        <begin position="321"/>
        <end position="326"/>
    </location>
</feature>
<feature type="helix" evidence="30">
    <location>
        <begin position="335"/>
        <end position="337"/>
    </location>
</feature>
<feature type="strand" evidence="32">
    <location>
        <begin position="338"/>
        <end position="340"/>
    </location>
</feature>
<feature type="strand" evidence="30">
    <location>
        <begin position="345"/>
        <end position="353"/>
    </location>
</feature>
<feature type="strand" evidence="30">
    <location>
        <begin position="356"/>
        <end position="365"/>
    </location>
</feature>
<feature type="strand" evidence="32">
    <location>
        <begin position="372"/>
        <end position="375"/>
    </location>
</feature>
<feature type="turn" evidence="33">
    <location>
        <begin position="377"/>
        <end position="380"/>
    </location>
</feature>
<feature type="helix" evidence="30">
    <location>
        <begin position="382"/>
        <end position="387"/>
    </location>
</feature>
<feature type="helix" evidence="30">
    <location>
        <begin position="389"/>
        <end position="392"/>
    </location>
</feature>
<proteinExistence type="evidence at protein level"/>
<dbReference type="EC" id="2.1.1.-" evidence="24"/>
<dbReference type="EC" id="2.1.1.361" evidence="5 6 11 18"/>
<dbReference type="EMBL" id="AY064546">
    <property type="protein sequence ID" value="AAL40879.1"/>
    <property type="status" value="ALT_INIT"/>
    <property type="molecule type" value="mRNA"/>
</dbReference>
<dbReference type="EMBL" id="AY102937">
    <property type="protein sequence ID" value="AAM47033.1"/>
    <property type="molecule type" value="mRNA"/>
</dbReference>
<dbReference type="EMBL" id="AF287261">
    <property type="protein sequence ID" value="AAF97812.2"/>
    <property type="molecule type" value="mRNA"/>
</dbReference>
<dbReference type="EMBL" id="AK292645">
    <property type="protein sequence ID" value="BAF85334.1"/>
    <property type="molecule type" value="mRNA"/>
</dbReference>
<dbReference type="EMBL" id="BC050346">
    <property type="protein sequence ID" value="AAH50346.1"/>
    <property type="molecule type" value="mRNA"/>
</dbReference>
<dbReference type="CCDS" id="CCDS9247.1">
    <molecule id="Q9NQR1-2"/>
</dbReference>
<dbReference type="RefSeq" id="NP_001311433.1">
    <property type="nucleotide sequence ID" value="NM_001324504.1"/>
</dbReference>
<dbReference type="RefSeq" id="NP_001311434.1">
    <property type="nucleotide sequence ID" value="NM_001324505.1"/>
</dbReference>
<dbReference type="RefSeq" id="NP_001311435.1">
    <property type="nucleotide sequence ID" value="NM_001324506.1"/>
</dbReference>
<dbReference type="RefSeq" id="NP_065115.3">
    <molecule id="Q9NQR1-2"/>
    <property type="nucleotide sequence ID" value="NM_020382.4"/>
</dbReference>
<dbReference type="PDB" id="1ZKK">
    <property type="method" value="X-ray"/>
    <property type="resolution" value="1.45 A"/>
    <property type="chains" value="A/B/C/D=231-393"/>
</dbReference>
<dbReference type="PDB" id="2BQZ">
    <property type="method" value="X-ray"/>
    <property type="resolution" value="1.50 A"/>
    <property type="chains" value="A/E=233-393"/>
</dbReference>
<dbReference type="PDB" id="3F9W">
    <property type="method" value="X-ray"/>
    <property type="resolution" value="1.60 A"/>
    <property type="chains" value="A/B/C/D=232-393"/>
</dbReference>
<dbReference type="PDB" id="3F9X">
    <property type="method" value="X-ray"/>
    <property type="resolution" value="1.25 A"/>
    <property type="chains" value="A/B/C/D=232-393"/>
</dbReference>
<dbReference type="PDB" id="3F9Y">
    <property type="method" value="X-ray"/>
    <property type="resolution" value="1.50 A"/>
    <property type="chains" value="A/B=232-393"/>
</dbReference>
<dbReference type="PDB" id="3F9Z">
    <property type="method" value="X-ray"/>
    <property type="resolution" value="1.60 A"/>
    <property type="chains" value="A/B/C/D=232-393"/>
</dbReference>
<dbReference type="PDB" id="4IJ8">
    <property type="method" value="X-ray"/>
    <property type="resolution" value="2.00 A"/>
    <property type="chains" value="A/B=232-393"/>
</dbReference>
<dbReference type="PDB" id="5HQ2">
    <property type="method" value="X-ray"/>
    <property type="resolution" value="4.50 A"/>
    <property type="chains" value="M=194-393"/>
</dbReference>
<dbReference type="PDB" id="5T5G">
    <property type="method" value="X-ray"/>
    <property type="resolution" value="2.10 A"/>
    <property type="chains" value="A=234-380"/>
</dbReference>
<dbReference type="PDB" id="5TEG">
    <property type="method" value="X-ray"/>
    <property type="resolution" value="1.30 A"/>
    <property type="chains" value="A/B=234-393"/>
</dbReference>
<dbReference type="PDB" id="5TH7">
    <property type="method" value="X-ray"/>
    <property type="resolution" value="1.95 A"/>
    <property type="chains" value="A/B=234-380"/>
</dbReference>
<dbReference type="PDB" id="5V2N">
    <property type="method" value="X-ray"/>
    <property type="resolution" value="2.00 A"/>
    <property type="chains" value="A=231-393"/>
</dbReference>
<dbReference type="PDB" id="5W1Y">
    <property type="method" value="X-ray"/>
    <property type="resolution" value="1.70 A"/>
    <property type="chains" value="A/B=232-393"/>
</dbReference>
<dbReference type="PDB" id="6BOZ">
    <property type="method" value="X-ray"/>
    <property type="resolution" value="2.40 A"/>
    <property type="chains" value="A/B=232-393"/>
</dbReference>
<dbReference type="PDB" id="7D1Z">
    <property type="method" value="EM"/>
    <property type="resolution" value="3.15 A"/>
    <property type="chains" value="K=45-393"/>
</dbReference>
<dbReference type="PDB" id="7D20">
    <property type="method" value="EM"/>
    <property type="resolution" value="3.00 A"/>
    <property type="chains" value="K=45-393"/>
</dbReference>
<dbReference type="PDB" id="7XPX">
    <property type="method" value="EM"/>
    <property type="resolution" value="3.20 A"/>
    <property type="chains" value="K=194-393"/>
</dbReference>
<dbReference type="PDBsum" id="1ZKK"/>
<dbReference type="PDBsum" id="2BQZ"/>
<dbReference type="PDBsum" id="3F9W"/>
<dbReference type="PDBsum" id="3F9X"/>
<dbReference type="PDBsum" id="3F9Y"/>
<dbReference type="PDBsum" id="3F9Z"/>
<dbReference type="PDBsum" id="4IJ8"/>
<dbReference type="PDBsum" id="5HQ2"/>
<dbReference type="PDBsum" id="5T5G"/>
<dbReference type="PDBsum" id="5TEG"/>
<dbReference type="PDBsum" id="5TH7"/>
<dbReference type="PDBsum" id="5V2N"/>
<dbReference type="PDBsum" id="5W1Y"/>
<dbReference type="PDBsum" id="6BOZ"/>
<dbReference type="PDBsum" id="7D1Z"/>
<dbReference type="PDBsum" id="7D20"/>
<dbReference type="PDBsum" id="7XPX"/>
<dbReference type="EMDB" id="EMD-30551"/>
<dbReference type="EMDB" id="EMD-30552"/>
<dbReference type="EMDB" id="EMD-33385"/>
<dbReference type="SMR" id="Q9NQR1"/>
<dbReference type="BioGRID" id="132490">
    <property type="interactions" value="78"/>
</dbReference>
<dbReference type="DIP" id="DIP-39133N"/>
<dbReference type="FunCoup" id="Q9NQR1">
    <property type="interactions" value="1874"/>
</dbReference>
<dbReference type="IntAct" id="Q9NQR1">
    <property type="interactions" value="39"/>
</dbReference>
<dbReference type="MINT" id="Q9NQR1"/>
<dbReference type="STRING" id="9606.ENSP00000384629"/>
<dbReference type="BindingDB" id="Q9NQR1"/>
<dbReference type="ChEMBL" id="CHEMBL1795176"/>
<dbReference type="GuidetoPHARMACOLOGY" id="2704"/>
<dbReference type="GlyGen" id="Q9NQR1">
    <property type="glycosylation" value="1 site, 1 O-linked glycan (1 site)"/>
</dbReference>
<dbReference type="iPTMnet" id="Q9NQR1"/>
<dbReference type="PhosphoSitePlus" id="Q9NQR1"/>
<dbReference type="BioMuta" id="KMT5A"/>
<dbReference type="DMDM" id="25091219"/>
<dbReference type="jPOST" id="Q9NQR1"/>
<dbReference type="MassIVE" id="Q9NQR1"/>
<dbReference type="PaxDb" id="9606-ENSP00000384629"/>
<dbReference type="PeptideAtlas" id="Q9NQR1"/>
<dbReference type="ProteomicsDB" id="82171">
    <molecule id="Q9NQR1-1"/>
</dbReference>
<dbReference type="ProteomicsDB" id="82172">
    <molecule id="Q9NQR1-2"/>
</dbReference>
<dbReference type="Pumba" id="Q9NQR1"/>
<dbReference type="Antibodypedia" id="31806">
    <property type="antibodies" value="612 antibodies from 37 providers"/>
</dbReference>
<dbReference type="DNASU" id="387893"/>
<dbReference type="Ensembl" id="ENST00000402868.8">
    <molecule id="Q9NQR1-2"/>
    <property type="protein sequence ID" value="ENSP00000384629.3"/>
    <property type="gene ID" value="ENSG00000183955.14"/>
</dbReference>
<dbReference type="GeneID" id="387893"/>
<dbReference type="KEGG" id="hsa:387893"/>
<dbReference type="MANE-Select" id="ENST00000402868.8">
    <molecule id="Q9NQR1-2"/>
    <property type="protein sequence ID" value="ENSP00000384629.3"/>
    <property type="RefSeq nucleotide sequence ID" value="NM_020382.7"/>
    <property type="RefSeq protein sequence ID" value="NP_065115.3"/>
</dbReference>
<dbReference type="UCSC" id="uc001uew.4">
    <molecule id="Q9NQR1-1"/>
    <property type="organism name" value="human"/>
</dbReference>
<dbReference type="AGR" id="HGNC:29489"/>
<dbReference type="CTD" id="387893"/>
<dbReference type="DisGeNET" id="387893"/>
<dbReference type="GeneCards" id="KMT5A"/>
<dbReference type="HGNC" id="HGNC:29489">
    <property type="gene designation" value="KMT5A"/>
</dbReference>
<dbReference type="HPA" id="ENSG00000183955">
    <property type="expression patterns" value="Low tissue specificity"/>
</dbReference>
<dbReference type="MIM" id="607240">
    <property type="type" value="gene"/>
</dbReference>
<dbReference type="neXtProt" id="NX_Q9NQR1"/>
<dbReference type="OpenTargets" id="ENSG00000183955"/>
<dbReference type="PharmGKB" id="PA143485616"/>
<dbReference type="VEuPathDB" id="HostDB:ENSG00000183955"/>
<dbReference type="eggNOG" id="KOG1085">
    <property type="taxonomic scope" value="Eukaryota"/>
</dbReference>
<dbReference type="GeneTree" id="ENSGT00940000160030"/>
<dbReference type="InParanoid" id="Q9NQR1"/>
<dbReference type="OMA" id="NIFTCQS"/>
<dbReference type="OrthoDB" id="5560686at2759"/>
<dbReference type="PAN-GO" id="Q9NQR1">
    <property type="GO annotations" value="7 GO annotations based on evolutionary models"/>
</dbReference>
<dbReference type="PhylomeDB" id="Q9NQR1"/>
<dbReference type="TreeFam" id="TF335181"/>
<dbReference type="BioCyc" id="MetaCyc:HS11381-MONOMER"/>
<dbReference type="BRENDA" id="2.1.1.361">
    <property type="organism ID" value="2681"/>
</dbReference>
<dbReference type="BRENDA" id="2.1.1.362">
    <property type="organism ID" value="2681"/>
</dbReference>
<dbReference type="PathwayCommons" id="Q9NQR1"/>
<dbReference type="Reactome" id="R-HSA-2299718">
    <property type="pathway name" value="Condensation of Prophase Chromosomes"/>
</dbReference>
<dbReference type="Reactome" id="R-HSA-3214841">
    <property type="pathway name" value="PKMTs methylate histone lysines"/>
</dbReference>
<dbReference type="Reactome" id="R-HSA-6804760">
    <property type="pathway name" value="Regulation of TP53 Activity through Methylation"/>
</dbReference>
<dbReference type="SABIO-RK" id="Q9NQR1"/>
<dbReference type="SignaLink" id="Q9NQR1"/>
<dbReference type="SIGNOR" id="Q9NQR1"/>
<dbReference type="BioGRID-ORCS" id="387893">
    <property type="hits" value="105 hits in 1140 CRISPR screens"/>
</dbReference>
<dbReference type="ChiTaRS" id="KMT5A">
    <property type="organism name" value="human"/>
</dbReference>
<dbReference type="EvolutionaryTrace" id="Q9NQR1"/>
<dbReference type="GeneWiki" id="SETD8"/>
<dbReference type="GenomeRNAi" id="387893"/>
<dbReference type="Pharos" id="Q9NQR1">
    <property type="development level" value="Tchem"/>
</dbReference>
<dbReference type="PRO" id="PR:Q9NQR1"/>
<dbReference type="Proteomes" id="UP000005640">
    <property type="component" value="Chromosome 12"/>
</dbReference>
<dbReference type="RNAct" id="Q9NQR1">
    <property type="molecule type" value="protein"/>
</dbReference>
<dbReference type="Bgee" id="ENSG00000183955">
    <property type="expression patterns" value="Expressed in sural nerve and 130 other cell types or tissues"/>
</dbReference>
<dbReference type="ExpressionAtlas" id="Q9NQR1">
    <property type="expression patterns" value="baseline and differential"/>
</dbReference>
<dbReference type="GO" id="GO:0000785">
    <property type="term" value="C:chromatin"/>
    <property type="evidence" value="ECO:0000314"/>
    <property type="project" value="UniProt"/>
</dbReference>
<dbReference type="GO" id="GO:0005829">
    <property type="term" value="C:cytosol"/>
    <property type="evidence" value="ECO:0000314"/>
    <property type="project" value="HPA"/>
</dbReference>
<dbReference type="GO" id="GO:0005654">
    <property type="term" value="C:nucleoplasm"/>
    <property type="evidence" value="ECO:0000314"/>
    <property type="project" value="HPA"/>
</dbReference>
<dbReference type="GO" id="GO:0005634">
    <property type="term" value="C:nucleus"/>
    <property type="evidence" value="ECO:0000318"/>
    <property type="project" value="GO_Central"/>
</dbReference>
<dbReference type="GO" id="GO:0005700">
    <property type="term" value="C:polytene chromosome"/>
    <property type="evidence" value="ECO:0000318"/>
    <property type="project" value="GO_Central"/>
</dbReference>
<dbReference type="GO" id="GO:0140939">
    <property type="term" value="F:histone H4 methyltransferase activity"/>
    <property type="evidence" value="ECO:0000304"/>
    <property type="project" value="Reactome"/>
</dbReference>
<dbReference type="GO" id="GO:0042799">
    <property type="term" value="F:histone H4K20 methyltransferase activity"/>
    <property type="evidence" value="ECO:0000314"/>
    <property type="project" value="UniProtKB"/>
</dbReference>
<dbReference type="GO" id="GO:0140944">
    <property type="term" value="F:histone H4K20 monomethyltransferase activity"/>
    <property type="evidence" value="ECO:0007669"/>
    <property type="project" value="UniProtKB-EC"/>
</dbReference>
<dbReference type="GO" id="GO:0042054">
    <property type="term" value="F:histone methyltransferase activity"/>
    <property type="evidence" value="ECO:0000314"/>
    <property type="project" value="UniProtKB"/>
</dbReference>
<dbReference type="GO" id="GO:0016278">
    <property type="term" value="F:lysine N-methyltransferase activity"/>
    <property type="evidence" value="ECO:0000304"/>
    <property type="project" value="Reactome"/>
</dbReference>
<dbReference type="GO" id="GO:0016279">
    <property type="term" value="F:protein-lysine N-methyltransferase activity"/>
    <property type="evidence" value="ECO:0000314"/>
    <property type="project" value="UniProtKB"/>
</dbReference>
<dbReference type="GO" id="GO:0003714">
    <property type="term" value="F:transcription corepressor activity"/>
    <property type="evidence" value="ECO:0000314"/>
    <property type="project" value="UniProtKB"/>
</dbReference>
<dbReference type="GO" id="GO:0051301">
    <property type="term" value="P:cell division"/>
    <property type="evidence" value="ECO:0007669"/>
    <property type="project" value="UniProtKB-KW"/>
</dbReference>
<dbReference type="GO" id="GO:0007076">
    <property type="term" value="P:mitotic chromosome condensation"/>
    <property type="evidence" value="ECO:0000304"/>
    <property type="project" value="Reactome"/>
</dbReference>
<dbReference type="GO" id="GO:0045892">
    <property type="term" value="P:negative regulation of DNA-templated transcription"/>
    <property type="evidence" value="ECO:0000314"/>
    <property type="project" value="UniProtKB"/>
</dbReference>
<dbReference type="GO" id="GO:2000042">
    <property type="term" value="P:negative regulation of double-strand break repair via homologous recombination"/>
    <property type="evidence" value="ECO:0000314"/>
    <property type="project" value="UniProt"/>
</dbReference>
<dbReference type="GO" id="GO:0000122">
    <property type="term" value="P:negative regulation of transcription by RNA polymerase II"/>
    <property type="evidence" value="ECO:0000315"/>
    <property type="project" value="UniProtKB"/>
</dbReference>
<dbReference type="GO" id="GO:0018026">
    <property type="term" value="P:peptidyl-lysine monomethylation"/>
    <property type="evidence" value="ECO:0000314"/>
    <property type="project" value="UniProtKB"/>
</dbReference>
<dbReference type="GO" id="GO:0043516">
    <property type="term" value="P:regulation of DNA damage response, signal transduction by p53 class mediator"/>
    <property type="evidence" value="ECO:0000315"/>
    <property type="project" value="UniProtKB"/>
</dbReference>
<dbReference type="GO" id="GO:1901796">
    <property type="term" value="P:regulation of signal transduction by p53 class mediator"/>
    <property type="evidence" value="ECO:0000304"/>
    <property type="project" value="Reactome"/>
</dbReference>
<dbReference type="GO" id="GO:0006357">
    <property type="term" value="P:regulation of transcription by RNA polymerase II"/>
    <property type="evidence" value="ECO:0000318"/>
    <property type="project" value="GO_Central"/>
</dbReference>
<dbReference type="CDD" id="cd10528">
    <property type="entry name" value="SET_SETD8"/>
    <property type="match status" value="1"/>
</dbReference>
<dbReference type="FunFam" id="2.170.270.10:FF:000021">
    <property type="entry name" value="Histone-lysine N-methyltransferase"/>
    <property type="match status" value="1"/>
</dbReference>
<dbReference type="Gene3D" id="2.170.270.10">
    <property type="entry name" value="SET domain"/>
    <property type="match status" value="1"/>
</dbReference>
<dbReference type="IDEAL" id="IID00101"/>
<dbReference type="InterPro" id="IPR051760">
    <property type="entry name" value="KMT5A"/>
</dbReference>
<dbReference type="InterPro" id="IPR016858">
    <property type="entry name" value="KMT5A-like"/>
</dbReference>
<dbReference type="InterPro" id="IPR047266">
    <property type="entry name" value="KMT5A-like_SET"/>
</dbReference>
<dbReference type="InterPro" id="IPR001214">
    <property type="entry name" value="SET_dom"/>
</dbReference>
<dbReference type="InterPro" id="IPR046341">
    <property type="entry name" value="SET_dom_sf"/>
</dbReference>
<dbReference type="PANTHER" id="PTHR46167">
    <property type="entry name" value="N-LYSINE METHYLTRANSFERASE KMT5A"/>
    <property type="match status" value="1"/>
</dbReference>
<dbReference type="PANTHER" id="PTHR46167:SF1">
    <property type="entry name" value="N-LYSINE METHYLTRANSFERASE KMT5A"/>
    <property type="match status" value="1"/>
</dbReference>
<dbReference type="Pfam" id="PF00856">
    <property type="entry name" value="SET"/>
    <property type="match status" value="1"/>
</dbReference>
<dbReference type="SMART" id="SM00317">
    <property type="entry name" value="SET"/>
    <property type="match status" value="1"/>
</dbReference>
<dbReference type="SUPFAM" id="SSF82199">
    <property type="entry name" value="SET domain"/>
    <property type="match status" value="1"/>
</dbReference>
<dbReference type="PROSITE" id="PS51571">
    <property type="entry name" value="SAM_MT43_PR_SET"/>
    <property type="match status" value="1"/>
</dbReference>
<dbReference type="PROSITE" id="PS50280">
    <property type="entry name" value="SET"/>
    <property type="match status" value="1"/>
</dbReference>